<dbReference type="EC" id="6.3.2.6" evidence="1"/>
<dbReference type="EMBL" id="AM920689">
    <property type="protein sequence ID" value="CAP49821.1"/>
    <property type="molecule type" value="Genomic_DNA"/>
</dbReference>
<dbReference type="SMR" id="B0RMY6"/>
<dbReference type="KEGG" id="xca:xcc-b100_0487"/>
<dbReference type="HOGENOM" id="CLU_045637_0_0_6"/>
<dbReference type="UniPathway" id="UPA00074">
    <property type="reaction ID" value="UER00131"/>
</dbReference>
<dbReference type="Proteomes" id="UP000001188">
    <property type="component" value="Chromosome"/>
</dbReference>
<dbReference type="GO" id="GO:0005737">
    <property type="term" value="C:cytoplasm"/>
    <property type="evidence" value="ECO:0007669"/>
    <property type="project" value="TreeGrafter"/>
</dbReference>
<dbReference type="GO" id="GO:0005524">
    <property type="term" value="F:ATP binding"/>
    <property type="evidence" value="ECO:0007669"/>
    <property type="project" value="UniProtKB-KW"/>
</dbReference>
<dbReference type="GO" id="GO:0004639">
    <property type="term" value="F:phosphoribosylaminoimidazolesuccinocarboxamide synthase activity"/>
    <property type="evidence" value="ECO:0007669"/>
    <property type="project" value="UniProtKB-UniRule"/>
</dbReference>
<dbReference type="GO" id="GO:0006189">
    <property type="term" value="P:'de novo' IMP biosynthetic process"/>
    <property type="evidence" value="ECO:0007669"/>
    <property type="project" value="UniProtKB-UniRule"/>
</dbReference>
<dbReference type="CDD" id="cd01414">
    <property type="entry name" value="SAICAR_synt_Sc"/>
    <property type="match status" value="1"/>
</dbReference>
<dbReference type="FunFam" id="3.30.200.20:FF:000365">
    <property type="entry name" value="Phosphoribosylaminoimidazole-succinocarboxamide synthase"/>
    <property type="match status" value="1"/>
</dbReference>
<dbReference type="FunFam" id="3.30.470.20:FF:000015">
    <property type="entry name" value="Phosphoribosylaminoimidazole-succinocarboxamide synthase"/>
    <property type="match status" value="1"/>
</dbReference>
<dbReference type="Gene3D" id="3.30.470.20">
    <property type="entry name" value="ATP-grasp fold, B domain"/>
    <property type="match status" value="1"/>
</dbReference>
<dbReference type="Gene3D" id="3.30.200.20">
    <property type="entry name" value="Phosphorylase Kinase, domain 1"/>
    <property type="match status" value="1"/>
</dbReference>
<dbReference type="HAMAP" id="MF_00137">
    <property type="entry name" value="SAICAR_synth"/>
    <property type="match status" value="1"/>
</dbReference>
<dbReference type="InterPro" id="IPR028923">
    <property type="entry name" value="SAICAR_synt/ADE2_N"/>
</dbReference>
<dbReference type="InterPro" id="IPR001636">
    <property type="entry name" value="SAICAR_synth"/>
</dbReference>
<dbReference type="InterPro" id="IPR018236">
    <property type="entry name" value="SAICAR_synthetase_CS"/>
</dbReference>
<dbReference type="NCBIfam" id="NF010568">
    <property type="entry name" value="PRK13961.1"/>
    <property type="match status" value="1"/>
</dbReference>
<dbReference type="NCBIfam" id="TIGR00081">
    <property type="entry name" value="purC"/>
    <property type="match status" value="1"/>
</dbReference>
<dbReference type="PANTHER" id="PTHR43700">
    <property type="entry name" value="PHOSPHORIBOSYLAMINOIMIDAZOLE-SUCCINOCARBOXAMIDE SYNTHASE"/>
    <property type="match status" value="1"/>
</dbReference>
<dbReference type="PANTHER" id="PTHR43700:SF1">
    <property type="entry name" value="PHOSPHORIBOSYLAMINOIMIDAZOLE-SUCCINOCARBOXAMIDE SYNTHASE"/>
    <property type="match status" value="1"/>
</dbReference>
<dbReference type="Pfam" id="PF01259">
    <property type="entry name" value="SAICAR_synt"/>
    <property type="match status" value="1"/>
</dbReference>
<dbReference type="SUPFAM" id="SSF56104">
    <property type="entry name" value="SAICAR synthase-like"/>
    <property type="match status" value="1"/>
</dbReference>
<dbReference type="PROSITE" id="PS01057">
    <property type="entry name" value="SAICAR_SYNTHETASE_1"/>
    <property type="match status" value="1"/>
</dbReference>
<dbReference type="PROSITE" id="PS01058">
    <property type="entry name" value="SAICAR_SYNTHETASE_2"/>
    <property type="match status" value="1"/>
</dbReference>
<organism>
    <name type="scientific">Xanthomonas campestris pv. campestris (strain B100)</name>
    <dbReference type="NCBI Taxonomy" id="509169"/>
    <lineage>
        <taxon>Bacteria</taxon>
        <taxon>Pseudomonadati</taxon>
        <taxon>Pseudomonadota</taxon>
        <taxon>Gammaproteobacteria</taxon>
        <taxon>Lysobacterales</taxon>
        <taxon>Lysobacteraceae</taxon>
        <taxon>Xanthomonas</taxon>
    </lineage>
</organism>
<gene>
    <name evidence="1" type="primary">purC</name>
    <name type="ordered locus">xcc-b100_0487</name>
</gene>
<feature type="chain" id="PRO_1000096027" description="Phosphoribosylaminoimidazole-succinocarboxamide synthase">
    <location>
        <begin position="1"/>
        <end position="310"/>
    </location>
</feature>
<sequence>MPVSTTLLQSDLPGLPLRHRGKVRDVFDIPRDRLPADAPPGDYLLMVATDRLSAFDVVLPDPIPGKGEMLCQVSNFWFHKTEHLMPNHLVDIRVEQVLPEGVDPALYAKRAVVTRKLKPVPVEAIARGYLIGSGWKDYQRTGKISGIELPDGLRQAEKLPEPIFTPSTKAAVGDHDENIDFDAMVKTVGAELAERVRDATLRIYRFAADFAAERGILLADTKFEFGTDADGRLYIMDEMLTPDSSRYWPADQYELGTSPPSYDKQFVRDYLETLDWGKTAPGPRLPADVIERTRAKYAEALQRLAGISVD</sequence>
<proteinExistence type="inferred from homology"/>
<comment type="catalytic activity">
    <reaction evidence="1">
        <text>5-amino-1-(5-phospho-D-ribosyl)imidazole-4-carboxylate + L-aspartate + ATP = (2S)-2-[5-amino-1-(5-phospho-beta-D-ribosyl)imidazole-4-carboxamido]succinate + ADP + phosphate + 2 H(+)</text>
        <dbReference type="Rhea" id="RHEA:22628"/>
        <dbReference type="ChEBI" id="CHEBI:15378"/>
        <dbReference type="ChEBI" id="CHEBI:29991"/>
        <dbReference type="ChEBI" id="CHEBI:30616"/>
        <dbReference type="ChEBI" id="CHEBI:43474"/>
        <dbReference type="ChEBI" id="CHEBI:58443"/>
        <dbReference type="ChEBI" id="CHEBI:77657"/>
        <dbReference type="ChEBI" id="CHEBI:456216"/>
        <dbReference type="EC" id="6.3.2.6"/>
    </reaction>
</comment>
<comment type="pathway">
    <text evidence="1">Purine metabolism; IMP biosynthesis via de novo pathway; 5-amino-1-(5-phospho-D-ribosyl)imidazole-4-carboxamide from 5-amino-1-(5-phospho-D-ribosyl)imidazole-4-carboxylate: step 1/2.</text>
</comment>
<comment type="similarity">
    <text evidence="1">Belongs to the SAICAR synthetase family.</text>
</comment>
<protein>
    <recommendedName>
        <fullName evidence="1">Phosphoribosylaminoimidazole-succinocarboxamide synthase</fullName>
        <ecNumber evidence="1">6.3.2.6</ecNumber>
    </recommendedName>
    <alternativeName>
        <fullName evidence="1">SAICAR synthetase</fullName>
    </alternativeName>
</protein>
<name>PUR7_XANCB</name>
<keyword id="KW-0067">ATP-binding</keyword>
<keyword id="KW-0436">Ligase</keyword>
<keyword id="KW-0547">Nucleotide-binding</keyword>
<keyword id="KW-0658">Purine biosynthesis</keyword>
<evidence type="ECO:0000255" key="1">
    <source>
        <dbReference type="HAMAP-Rule" id="MF_00137"/>
    </source>
</evidence>
<accession>B0RMY6</accession>
<reference key="1">
    <citation type="journal article" date="2008" name="J. Biotechnol.">
        <title>The genome of Xanthomonas campestris pv. campestris B100 and its use for the reconstruction of metabolic pathways involved in xanthan biosynthesis.</title>
        <authorList>
            <person name="Vorhoelter F.-J."/>
            <person name="Schneiker S."/>
            <person name="Goesmann A."/>
            <person name="Krause L."/>
            <person name="Bekel T."/>
            <person name="Kaiser O."/>
            <person name="Linke B."/>
            <person name="Patschkowski T."/>
            <person name="Rueckert C."/>
            <person name="Schmid J."/>
            <person name="Sidhu V.K."/>
            <person name="Sieber V."/>
            <person name="Tauch A."/>
            <person name="Watt S.A."/>
            <person name="Weisshaar B."/>
            <person name="Becker A."/>
            <person name="Niehaus K."/>
            <person name="Puehler A."/>
        </authorList>
    </citation>
    <scope>NUCLEOTIDE SEQUENCE [LARGE SCALE GENOMIC DNA]</scope>
    <source>
        <strain>B100</strain>
    </source>
</reference>